<gene>
    <name type="primary">glpD</name>
    <name type="synonym">glyD</name>
    <name type="ordered locus">b3426</name>
    <name type="ordered locus">JW3389</name>
</gene>
<protein>
    <recommendedName>
        <fullName>Aerobic glycerol-3-phosphate dehydrogenase</fullName>
        <ecNumber>1.1.5.3</ecNumber>
    </recommendedName>
</protein>
<organism>
    <name type="scientific">Escherichia coli (strain K12)</name>
    <dbReference type="NCBI Taxonomy" id="83333"/>
    <lineage>
        <taxon>Bacteria</taxon>
        <taxon>Pseudomonadati</taxon>
        <taxon>Pseudomonadota</taxon>
        <taxon>Gammaproteobacteria</taxon>
        <taxon>Enterobacterales</taxon>
        <taxon>Enterobacteriaceae</taxon>
        <taxon>Escherichia</taxon>
    </lineage>
</organism>
<keyword id="KW-0002">3D-structure</keyword>
<keyword id="KW-0963">Cytoplasm</keyword>
<keyword id="KW-0274">FAD</keyword>
<keyword id="KW-0285">Flavoprotein</keyword>
<keyword id="KW-0319">Glycerol metabolism</keyword>
<keyword id="KW-0560">Oxidoreductase</keyword>
<keyword id="KW-1185">Reference proteome</keyword>
<proteinExistence type="evidence at protein level"/>
<accession>P13035</accession>
<accession>P78115</accession>
<accession>Q2M790</accession>
<accession>Q47234</accession>
<reference key="1">
    <citation type="journal article" date="1991" name="J. Bacteriol.">
        <title>Nucleotide sequence of the glpD gene encoding aerobic sn-glycerol 3-phosphate dehydrogenase of Escherichia coli K-12.</title>
        <authorList>
            <person name="Austin D."/>
            <person name="Larson T.J."/>
        </authorList>
    </citation>
    <scope>NUCLEOTIDE SEQUENCE [GENOMIC DNA]</scope>
    <source>
        <strain>K12</strain>
    </source>
</reference>
<reference key="2">
    <citation type="journal article" date="1989" name="Agric. Biol. Chem.">
        <title>Nucleotide sequence of the glycerol-3-phosphate dehydrogenase gene of Escherichia coli and regulation by the cAMP-CRP complex.</title>
        <authorList>
            <person name="Choi Y.-L."/>
            <person name="Kawase S."/>
            <person name="Kawamukai M."/>
            <person name="Utsumi R."/>
            <person name="Sakai H."/>
            <person name="Komano T."/>
        </authorList>
    </citation>
    <scope>NUCLEOTIDE SEQUENCE [GENOMIC DNA]</scope>
</reference>
<reference key="3">
    <citation type="journal article" date="1997" name="Science">
        <title>The complete genome sequence of Escherichia coli K-12.</title>
        <authorList>
            <person name="Blattner F.R."/>
            <person name="Plunkett G. III"/>
            <person name="Bloch C.A."/>
            <person name="Perna N.T."/>
            <person name="Burland V."/>
            <person name="Riley M."/>
            <person name="Collado-Vides J."/>
            <person name="Glasner J.D."/>
            <person name="Rode C.K."/>
            <person name="Mayhew G.F."/>
            <person name="Gregor J."/>
            <person name="Davis N.W."/>
            <person name="Kirkpatrick H.A."/>
            <person name="Goeden M.A."/>
            <person name="Rose D.J."/>
            <person name="Mau B."/>
            <person name="Shao Y."/>
        </authorList>
    </citation>
    <scope>NUCLEOTIDE SEQUENCE [LARGE SCALE GENOMIC DNA]</scope>
    <source>
        <strain>K12 / MG1655 / ATCC 47076</strain>
    </source>
</reference>
<reference key="4">
    <citation type="journal article" date="2006" name="Mol. Syst. Biol.">
        <title>Highly accurate genome sequences of Escherichia coli K-12 strains MG1655 and W3110.</title>
        <authorList>
            <person name="Hayashi K."/>
            <person name="Morooka N."/>
            <person name="Yamamoto Y."/>
            <person name="Fujita K."/>
            <person name="Isono K."/>
            <person name="Choi S."/>
            <person name="Ohtsubo E."/>
            <person name="Baba T."/>
            <person name="Wanner B.L."/>
            <person name="Mori H."/>
            <person name="Horiuchi T."/>
        </authorList>
    </citation>
    <scope>NUCLEOTIDE SEQUENCE [LARGE SCALE GENOMIC DNA]</scope>
    <source>
        <strain>K12 / W3110 / ATCC 27325 / DSM 5911</strain>
    </source>
</reference>
<reference key="5">
    <citation type="journal article" date="1988" name="J. Bacteriol.">
        <title>Structures of the promoter and operator of the glpD gene encoding aerobic sn-glycerol-3-phosphate dehydrogenase of Escherichia coli K-12.</title>
        <authorList>
            <person name="Ye S."/>
            <person name="Larson T.J."/>
        </authorList>
    </citation>
    <scope>NUCLEOTIDE SEQUENCE [GENOMIC DNA] OF 1-61</scope>
    <source>
        <strain>K12</strain>
    </source>
</reference>
<reference key="6">
    <citation type="journal article" date="1988" name="Nucleic Acids Res.">
        <title>Nucleotide sequence of the glpR gene encoding the repressor for the glycerol-3-phosphate regulon of Escherichia coli K12.</title>
        <authorList>
            <person name="Choi Y.-L."/>
            <person name="Kawase S."/>
            <person name="Nishida T."/>
            <person name="Sakai H."/>
            <person name="Komano T."/>
            <person name="Kawamukai M."/>
            <person name="Utsumi R."/>
            <person name="Kohara Y."/>
            <person name="Akiyama K."/>
        </authorList>
    </citation>
    <scope>NUCLEOTIDE SEQUENCE [GENOMIC DNA] OF 1-61</scope>
</reference>
<reference key="7">
    <citation type="journal article" date="1997" name="Electrophoresis">
        <title>Escherichia coli proteome analysis using the gene-protein database.</title>
        <authorList>
            <person name="VanBogelen R.A."/>
            <person name="Abshire K.Z."/>
            <person name="Moldover B."/>
            <person name="Olson E.R."/>
            <person name="Neidhardt F.C."/>
        </authorList>
    </citation>
    <scope>IDENTIFICATION BY 2D-GEL</scope>
</reference>
<dbReference type="EC" id="1.1.5.3"/>
<dbReference type="EMBL" id="M55989">
    <property type="protein sequence ID" value="AAA24636.1"/>
    <property type="molecule type" value="Genomic_DNA"/>
</dbReference>
<dbReference type="EMBL" id="M96795">
    <property type="protein sequence ID" value="AAC28164.1"/>
    <property type="molecule type" value="Genomic_DNA"/>
</dbReference>
<dbReference type="EMBL" id="D00425">
    <property type="protein sequence ID" value="BAA00327.1"/>
    <property type="molecule type" value="Genomic_DNA"/>
</dbReference>
<dbReference type="EMBL" id="U18997">
    <property type="protein sequence ID" value="AAA58224.1"/>
    <property type="molecule type" value="Genomic_DNA"/>
</dbReference>
<dbReference type="EMBL" id="U00096">
    <property type="protein sequence ID" value="AAC76451.1"/>
    <property type="molecule type" value="Genomic_DNA"/>
</dbReference>
<dbReference type="EMBL" id="AP009048">
    <property type="protein sequence ID" value="BAE77866.1"/>
    <property type="molecule type" value="Genomic_DNA"/>
</dbReference>
<dbReference type="EMBL" id="M21277">
    <property type="protein sequence ID" value="AAA23885.1"/>
    <property type="molecule type" value="Genomic_DNA"/>
</dbReference>
<dbReference type="EMBL" id="M54940">
    <property type="protein sequence ID" value="AAA23888.1"/>
    <property type="status" value="ALT_INIT"/>
    <property type="molecule type" value="Genomic_DNA"/>
</dbReference>
<dbReference type="PIR" id="A39186">
    <property type="entry name" value="DEECGD"/>
</dbReference>
<dbReference type="RefSeq" id="NP_417884.1">
    <property type="nucleotide sequence ID" value="NC_000913.3"/>
</dbReference>
<dbReference type="RefSeq" id="WP_000448136.1">
    <property type="nucleotide sequence ID" value="NZ_SSZK01000008.1"/>
</dbReference>
<dbReference type="PDB" id="2QCU">
    <property type="method" value="X-ray"/>
    <property type="resolution" value="1.75 A"/>
    <property type="chains" value="A/B=1-501"/>
</dbReference>
<dbReference type="PDB" id="2R45">
    <property type="method" value="X-ray"/>
    <property type="resolution" value="2.30 A"/>
    <property type="chains" value="A/B=1-501"/>
</dbReference>
<dbReference type="PDB" id="2R46">
    <property type="method" value="X-ray"/>
    <property type="resolution" value="2.10 A"/>
    <property type="chains" value="A/B=1-501"/>
</dbReference>
<dbReference type="PDB" id="2R4E">
    <property type="method" value="X-ray"/>
    <property type="resolution" value="2.10 A"/>
    <property type="chains" value="A/B=1-501"/>
</dbReference>
<dbReference type="PDB" id="2R4J">
    <property type="method" value="X-ray"/>
    <property type="resolution" value="1.96 A"/>
    <property type="chains" value="A/B=1-501"/>
</dbReference>
<dbReference type="PDBsum" id="2QCU"/>
<dbReference type="PDBsum" id="2R45"/>
<dbReference type="PDBsum" id="2R46"/>
<dbReference type="PDBsum" id="2R4E"/>
<dbReference type="PDBsum" id="2R4J"/>
<dbReference type="SMR" id="P13035"/>
<dbReference type="BioGRID" id="4261265">
    <property type="interactions" value="513"/>
</dbReference>
<dbReference type="DIP" id="DIP-9793N"/>
<dbReference type="FunCoup" id="P13035">
    <property type="interactions" value="748"/>
</dbReference>
<dbReference type="IntAct" id="P13035">
    <property type="interactions" value="91"/>
</dbReference>
<dbReference type="STRING" id="511145.b3426"/>
<dbReference type="jPOST" id="P13035"/>
<dbReference type="PaxDb" id="511145-b3426"/>
<dbReference type="EnsemblBacteria" id="AAC76451">
    <property type="protein sequence ID" value="AAC76451"/>
    <property type="gene ID" value="b3426"/>
</dbReference>
<dbReference type="GeneID" id="947934"/>
<dbReference type="KEGG" id="ecj:JW3389"/>
<dbReference type="KEGG" id="eco:b3426"/>
<dbReference type="KEGG" id="ecoc:C3026_18575"/>
<dbReference type="PATRIC" id="fig|511145.12.peg.3521"/>
<dbReference type="EchoBASE" id="EB0389"/>
<dbReference type="eggNOG" id="COG0578">
    <property type="taxonomic scope" value="Bacteria"/>
</dbReference>
<dbReference type="HOGENOM" id="CLU_015740_5_0_6"/>
<dbReference type="InParanoid" id="P13035"/>
<dbReference type="OMA" id="PHIVKPM"/>
<dbReference type="OrthoDB" id="9766796at2"/>
<dbReference type="PhylomeDB" id="P13035"/>
<dbReference type="BioCyc" id="EcoCyc:AERGLYC3PDEHYDROG-MONOMER"/>
<dbReference type="BioCyc" id="MetaCyc:AERGLYC3PDEHYDROG-MONOMER"/>
<dbReference type="BRENDA" id="1.1.5.3">
    <property type="organism ID" value="2026"/>
</dbReference>
<dbReference type="UniPathway" id="UPA00618">
    <property type="reaction ID" value="UER00674"/>
</dbReference>
<dbReference type="EvolutionaryTrace" id="P13035"/>
<dbReference type="PRO" id="PR:P13035"/>
<dbReference type="Proteomes" id="UP000000625">
    <property type="component" value="Chromosome"/>
</dbReference>
<dbReference type="GO" id="GO:0009331">
    <property type="term" value="C:glycerol-3-phosphate dehydrogenase (FAD) complex"/>
    <property type="evidence" value="ECO:0000314"/>
    <property type="project" value="EcoCyc"/>
</dbReference>
<dbReference type="GO" id="GO:0005886">
    <property type="term" value="C:plasma membrane"/>
    <property type="evidence" value="ECO:0000314"/>
    <property type="project" value="EcoCyc"/>
</dbReference>
<dbReference type="GO" id="GO:0009055">
    <property type="term" value="F:electron transfer activity"/>
    <property type="evidence" value="ECO:0000314"/>
    <property type="project" value="EcoCyc"/>
</dbReference>
<dbReference type="GO" id="GO:0071949">
    <property type="term" value="F:FAD binding"/>
    <property type="evidence" value="ECO:0000314"/>
    <property type="project" value="EcoCyc"/>
</dbReference>
<dbReference type="GO" id="GO:0004368">
    <property type="term" value="F:glycerol-3-phosphate dehydrogenase (quinone) activity"/>
    <property type="evidence" value="ECO:0000314"/>
    <property type="project" value="EcoCyc"/>
</dbReference>
<dbReference type="GO" id="GO:0042803">
    <property type="term" value="F:protein homodimerization activity"/>
    <property type="evidence" value="ECO:0000314"/>
    <property type="project" value="EcoCyc"/>
</dbReference>
<dbReference type="GO" id="GO:0009060">
    <property type="term" value="P:aerobic respiration"/>
    <property type="evidence" value="ECO:0000269"/>
    <property type="project" value="EcoCyc"/>
</dbReference>
<dbReference type="GO" id="GO:0009061">
    <property type="term" value="P:anaerobic respiration"/>
    <property type="evidence" value="ECO:0000269"/>
    <property type="project" value="EcoCyc"/>
</dbReference>
<dbReference type="GO" id="GO:0019563">
    <property type="term" value="P:glycerol catabolic process"/>
    <property type="evidence" value="ECO:0007669"/>
    <property type="project" value="UniProtKB-UniPathway"/>
</dbReference>
<dbReference type="GO" id="GO:0046168">
    <property type="term" value="P:glycerol-3-phosphate catabolic process"/>
    <property type="evidence" value="ECO:0000315"/>
    <property type="project" value="EcoCyc"/>
</dbReference>
<dbReference type="FunFam" id="1.10.8.870:FF:000002">
    <property type="entry name" value="Glycerol-3-phosphate dehydrogenase"/>
    <property type="match status" value="1"/>
</dbReference>
<dbReference type="Gene3D" id="6.10.250.1890">
    <property type="match status" value="1"/>
</dbReference>
<dbReference type="Gene3D" id="1.10.8.870">
    <property type="entry name" value="Alpha-glycerophosphate oxidase, cap domain"/>
    <property type="match status" value="1"/>
</dbReference>
<dbReference type="Gene3D" id="3.30.9.10">
    <property type="entry name" value="D-Amino Acid Oxidase, subunit A, domain 2"/>
    <property type="match status" value="1"/>
</dbReference>
<dbReference type="Gene3D" id="3.50.50.60">
    <property type="entry name" value="FAD/NAD(P)-binding domain"/>
    <property type="match status" value="1"/>
</dbReference>
<dbReference type="InterPro" id="IPR031656">
    <property type="entry name" value="DAO_C"/>
</dbReference>
<dbReference type="InterPro" id="IPR038299">
    <property type="entry name" value="DAO_C_sf"/>
</dbReference>
<dbReference type="InterPro" id="IPR006076">
    <property type="entry name" value="FAD-dep_OxRdtase"/>
</dbReference>
<dbReference type="InterPro" id="IPR036188">
    <property type="entry name" value="FAD/NAD-bd_sf"/>
</dbReference>
<dbReference type="InterPro" id="IPR000447">
    <property type="entry name" value="G3P_DH_FAD-dep"/>
</dbReference>
<dbReference type="NCBIfam" id="NF008899">
    <property type="entry name" value="PRK12266.1"/>
    <property type="match status" value="1"/>
</dbReference>
<dbReference type="NCBIfam" id="NF009906">
    <property type="entry name" value="PRK13369.1"/>
    <property type="match status" value="1"/>
</dbReference>
<dbReference type="PANTHER" id="PTHR11985">
    <property type="entry name" value="GLYCEROL-3-PHOSPHATE DEHYDROGENASE"/>
    <property type="match status" value="1"/>
</dbReference>
<dbReference type="PANTHER" id="PTHR11985:SF15">
    <property type="entry name" value="GLYCEROL-3-PHOSPHATE DEHYDROGENASE, MITOCHONDRIAL"/>
    <property type="match status" value="1"/>
</dbReference>
<dbReference type="Pfam" id="PF01266">
    <property type="entry name" value="DAO"/>
    <property type="match status" value="1"/>
</dbReference>
<dbReference type="Pfam" id="PF16901">
    <property type="entry name" value="DAO_C"/>
    <property type="match status" value="1"/>
</dbReference>
<dbReference type="PRINTS" id="PR01001">
    <property type="entry name" value="FADG3PDH"/>
</dbReference>
<dbReference type="SUPFAM" id="SSF54373">
    <property type="entry name" value="FAD-linked reductases, C-terminal domain"/>
    <property type="match status" value="1"/>
</dbReference>
<dbReference type="SUPFAM" id="SSF51905">
    <property type="entry name" value="FAD/NAD(P)-binding domain"/>
    <property type="match status" value="1"/>
</dbReference>
<dbReference type="PROSITE" id="PS00977">
    <property type="entry name" value="FAD_G3PDH_1"/>
    <property type="match status" value="1"/>
</dbReference>
<dbReference type="PROSITE" id="PS00978">
    <property type="entry name" value="FAD_G3PDH_2"/>
    <property type="match status" value="1"/>
</dbReference>
<feature type="chain" id="PRO_0000126098" description="Aerobic glycerol-3-phosphate dehydrogenase">
    <location>
        <begin position="1"/>
        <end position="501"/>
    </location>
</feature>
<feature type="binding site" evidence="1">
    <location>
        <begin position="5"/>
        <end position="33"/>
    </location>
    <ligand>
        <name>FAD</name>
        <dbReference type="ChEBI" id="CHEBI:57692"/>
    </ligand>
</feature>
<feature type="sequence conflict" description="In Ref. 2; BAA00327." evidence="2" ref="2">
    <original>A</original>
    <variation>G</variation>
    <location>
        <position position="23"/>
    </location>
</feature>
<feature type="sequence conflict" description="In Ref. 2; BAA00327." evidence="2" ref="2">
    <original>QAITRDYTLDIHDENGKAPLLSVFGG</original>
    <variation>HVLPVITPLIFMMKMAKHRCCRYSAA</variation>
    <location>
        <begin position="328"/>
        <end position="353"/>
    </location>
</feature>
<feature type="sequence conflict" description="In Ref. 2; BAA00327." evidence="2" ref="2">
    <original>DDALWRRTKQGMWLNADQQSRVSQWLVEYTQQRLSLAS</original>
    <variation>ARRPVASHKTRHVAKCGSTISCESVAGGVYAAEVIAGVVN</variation>
    <location>
        <begin position="464"/>
        <end position="501"/>
    </location>
</feature>
<feature type="strand" evidence="3">
    <location>
        <begin position="4"/>
        <end position="9"/>
    </location>
</feature>
<feature type="helix" evidence="3">
    <location>
        <begin position="13"/>
        <end position="24"/>
    </location>
</feature>
<feature type="strand" evidence="3">
    <location>
        <begin position="29"/>
        <end position="32"/>
    </location>
</feature>
<feature type="strand" evidence="3">
    <location>
        <begin position="34"/>
        <end position="36"/>
    </location>
</feature>
<feature type="helix" evidence="3">
    <location>
        <begin position="41"/>
        <end position="43"/>
    </location>
</feature>
<feature type="helix" evidence="3">
    <location>
        <begin position="53"/>
        <end position="58"/>
    </location>
</feature>
<feature type="helix" evidence="3">
    <location>
        <begin position="61"/>
        <end position="77"/>
    </location>
</feature>
<feature type="turn" evidence="3">
    <location>
        <begin position="79"/>
        <end position="81"/>
    </location>
</feature>
<feature type="strand" evidence="3">
    <location>
        <begin position="82"/>
        <end position="90"/>
    </location>
</feature>
<feature type="turn" evidence="3">
    <location>
        <begin position="93"/>
        <end position="95"/>
    </location>
</feature>
<feature type="helix" evidence="3">
    <location>
        <begin position="98"/>
        <end position="109"/>
    </location>
</feature>
<feature type="strand" evidence="3">
    <location>
        <begin position="110"/>
        <end position="112"/>
    </location>
</feature>
<feature type="strand" evidence="3">
    <location>
        <begin position="115"/>
        <end position="117"/>
    </location>
</feature>
<feature type="strand" evidence="3">
    <location>
        <begin position="121"/>
        <end position="124"/>
    </location>
</feature>
<feature type="strand" evidence="3">
    <location>
        <begin position="129"/>
        <end position="131"/>
    </location>
</feature>
<feature type="strand" evidence="3">
    <location>
        <begin position="137"/>
        <end position="146"/>
    </location>
</feature>
<feature type="helix" evidence="3">
    <location>
        <begin position="148"/>
        <end position="161"/>
    </location>
</feature>
<feature type="strand" evidence="3">
    <location>
        <begin position="165"/>
        <end position="167"/>
    </location>
</feature>
<feature type="strand" evidence="3">
    <location>
        <begin position="169"/>
        <end position="178"/>
    </location>
</feature>
<feature type="strand" evidence="3">
    <location>
        <begin position="181"/>
        <end position="188"/>
    </location>
</feature>
<feature type="turn" evidence="3">
    <location>
        <begin position="189"/>
        <end position="191"/>
    </location>
</feature>
<feature type="strand" evidence="3">
    <location>
        <begin position="194"/>
        <end position="200"/>
    </location>
</feature>
<feature type="strand" evidence="3">
    <location>
        <begin position="202"/>
        <end position="204"/>
    </location>
</feature>
<feature type="helix" evidence="3">
    <location>
        <begin position="207"/>
        <end position="209"/>
    </location>
</feature>
<feature type="helix" evidence="3">
    <location>
        <begin position="210"/>
        <end position="216"/>
    </location>
</feature>
<feature type="strand" evidence="3">
    <location>
        <begin position="229"/>
        <end position="237"/>
    </location>
</feature>
<feature type="strand" evidence="3">
    <location>
        <begin position="239"/>
        <end position="241"/>
    </location>
</feature>
<feature type="strand" evidence="3">
    <location>
        <begin position="245"/>
        <end position="249"/>
    </location>
</feature>
<feature type="strand" evidence="3">
    <location>
        <begin position="255"/>
        <end position="261"/>
    </location>
</feature>
<feature type="turn" evidence="3">
    <location>
        <begin position="262"/>
        <end position="264"/>
    </location>
</feature>
<feature type="strand" evidence="3">
    <location>
        <begin position="265"/>
        <end position="269"/>
    </location>
</feature>
<feature type="helix" evidence="3">
    <location>
        <begin position="279"/>
        <end position="281"/>
    </location>
</feature>
<feature type="helix" evidence="3">
    <location>
        <begin position="286"/>
        <end position="299"/>
    </location>
</feature>
<feature type="strand" evidence="3">
    <location>
        <begin position="300"/>
        <end position="302"/>
    </location>
</feature>
<feature type="helix" evidence="3">
    <location>
        <begin position="306"/>
        <end position="308"/>
    </location>
</feature>
<feature type="strand" evidence="3">
    <location>
        <begin position="311"/>
        <end position="317"/>
    </location>
</feature>
<feature type="helix" evidence="3">
    <location>
        <begin position="327"/>
        <end position="329"/>
    </location>
</feature>
<feature type="strand" evidence="3">
    <location>
        <begin position="335"/>
        <end position="341"/>
    </location>
</feature>
<feature type="strand" evidence="3">
    <location>
        <begin position="344"/>
        <end position="351"/>
    </location>
</feature>
<feature type="helix" evidence="3">
    <location>
        <begin position="355"/>
        <end position="357"/>
    </location>
</feature>
<feature type="helix" evidence="3">
    <location>
        <begin position="358"/>
        <end position="369"/>
    </location>
</feature>
<feature type="helix" evidence="3">
    <location>
        <begin position="370"/>
        <end position="372"/>
    </location>
</feature>
<feature type="helix" evidence="3">
    <location>
        <begin position="381"/>
        <end position="383"/>
    </location>
</feature>
<feature type="strand" evidence="3">
    <location>
        <begin position="391"/>
        <end position="393"/>
    </location>
</feature>
<feature type="turn" evidence="3">
    <location>
        <begin position="394"/>
        <end position="397"/>
    </location>
</feature>
<feature type="helix" evidence="3">
    <location>
        <begin position="398"/>
        <end position="405"/>
    </location>
</feature>
<feature type="helix" evidence="3">
    <location>
        <begin position="411"/>
        <end position="420"/>
    </location>
</feature>
<feature type="helix" evidence="3">
    <location>
        <begin position="422"/>
        <end position="424"/>
    </location>
</feature>
<feature type="helix" evidence="3">
    <location>
        <begin position="425"/>
        <end position="429"/>
    </location>
</feature>
<feature type="helix" evidence="3">
    <location>
        <begin position="435"/>
        <end position="438"/>
    </location>
</feature>
<feature type="helix" evidence="3">
    <location>
        <begin position="448"/>
        <end position="457"/>
    </location>
</feature>
<feature type="helix" evidence="3">
    <location>
        <begin position="463"/>
        <end position="468"/>
    </location>
</feature>
<feature type="helix" evidence="3">
    <location>
        <begin position="473"/>
        <end position="475"/>
    </location>
</feature>
<feature type="helix" evidence="3">
    <location>
        <begin position="479"/>
        <end position="494"/>
    </location>
</feature>
<feature type="strand" evidence="3">
    <location>
        <begin position="495"/>
        <end position="498"/>
    </location>
</feature>
<sequence length="501" mass="56751">METKDLIVIGGGINGAGIAADAAGRGLSVLMLEAQDLACATSSASSKLIHGGLRYLEHYEFRLVSEALAEREVLLKMAPHIAFPMRFRLPHRPHLRPAWMIRIGLFMYDHLGKRTSLPGSTGLRFGANSVLKPEIKRGFEYSDCWVDDARLVLANAQMVVRKGGEVLTRTRATSARRENGLWIVEAEDIDTGKKYSWQARGLVNATGPWVKQFFDDGMHLPSPYGIRLIKGSHIVVPRVHTQKQAYILQNEDKRIVFVIPWMDEFSIIGTTDVEYKGDPKAVKIEESEINYLLNVYNTHFKKQLSRDDIVWTYSGVRPLCDDESDSPQAITRDYTLDIHDENGKAPLLSVFGGKLTTYRKLAEHALEKLTPYYQGIGPAWTKESVLPGGAIEGDRDDYAARLRRRYPFLTESLARHYARTYGSNSELLLGNAGTVSDLGEDFGHEFYEAELKYLVDHEWVRRADDALWRRTKQGMWLNADQQSRVSQWLVEYTQQRLSLAS</sequence>
<comment type="function">
    <text>Conversion of glycerol 3-phosphate to dihydroxyacetone. Uses molecular oxygen or nitrate as electron acceptor.</text>
</comment>
<comment type="catalytic activity">
    <reaction>
        <text>a quinone + sn-glycerol 3-phosphate = dihydroxyacetone phosphate + a quinol</text>
        <dbReference type="Rhea" id="RHEA:18977"/>
        <dbReference type="ChEBI" id="CHEBI:24646"/>
        <dbReference type="ChEBI" id="CHEBI:57597"/>
        <dbReference type="ChEBI" id="CHEBI:57642"/>
        <dbReference type="ChEBI" id="CHEBI:132124"/>
        <dbReference type="EC" id="1.1.5.3"/>
    </reaction>
</comment>
<comment type="cofactor">
    <cofactor>
        <name>FAD</name>
        <dbReference type="ChEBI" id="CHEBI:57692"/>
    </cofactor>
</comment>
<comment type="pathway">
    <text>Polyol metabolism; glycerol degradation via glycerol kinase pathway; glycerone phosphate from sn-glycerol 3-phosphate (aerobic route): step 1/1.</text>
</comment>
<comment type="interaction">
    <interactant intactId="EBI-548509">
        <id>P13035</id>
    </interactant>
    <interactant intactId="EBI-548491">
        <id>P0AEE8</id>
        <label>dam</label>
    </interactant>
    <organismsDiffer>false</organismsDiffer>
    <experiments>3</experiments>
</comment>
<comment type="subcellular location">
    <subcellularLocation>
        <location>Cytoplasm</location>
    </subcellularLocation>
</comment>
<comment type="miscellaneous">
    <text>There are two sn-glycerol-3-phosphate dehydrogenase isozymes in E.coli: one is aerobic, the other anaerobic.</text>
</comment>
<comment type="similarity">
    <text evidence="2">Belongs to the FAD-dependent glycerol-3-phosphate dehydrogenase family.</text>
</comment>
<comment type="sequence caution" evidence="2">
    <conflict type="erroneous initiation">
        <sequence resource="EMBL-CDS" id="AAA23888"/>
    </conflict>
</comment>
<name>GLPD_ECOLI</name>
<evidence type="ECO:0000255" key="1"/>
<evidence type="ECO:0000305" key="2"/>
<evidence type="ECO:0007829" key="3">
    <source>
        <dbReference type="PDB" id="2QCU"/>
    </source>
</evidence>